<name>AROA_ECOLC</name>
<protein>
    <recommendedName>
        <fullName evidence="1">3-phosphoshikimate 1-carboxyvinyltransferase</fullName>
        <ecNumber evidence="1">2.5.1.19</ecNumber>
    </recommendedName>
    <alternativeName>
        <fullName evidence="1">5-enolpyruvylshikimate-3-phosphate synthase</fullName>
        <shortName evidence="1">EPSP synthase</shortName>
        <shortName evidence="1">EPSPS</shortName>
    </alternativeName>
</protein>
<gene>
    <name evidence="1" type="primary">aroA</name>
    <name type="ordered locus">EcolC_2688</name>
</gene>
<feature type="chain" id="PRO_1000077988" description="3-phosphoshikimate 1-carboxyvinyltransferase">
    <location>
        <begin position="1"/>
        <end position="427"/>
    </location>
</feature>
<feature type="active site" description="Proton acceptor" evidence="1">
    <location>
        <position position="313"/>
    </location>
</feature>
<feature type="binding site" evidence="1">
    <location>
        <position position="22"/>
    </location>
    <ligand>
        <name>3-phosphoshikimate</name>
        <dbReference type="ChEBI" id="CHEBI:145989"/>
    </ligand>
</feature>
<feature type="binding site" evidence="1">
    <location>
        <position position="22"/>
    </location>
    <ligand>
        <name>phosphoenolpyruvate</name>
        <dbReference type="ChEBI" id="CHEBI:58702"/>
    </ligand>
</feature>
<feature type="binding site" evidence="1">
    <location>
        <position position="23"/>
    </location>
    <ligand>
        <name>3-phosphoshikimate</name>
        <dbReference type="ChEBI" id="CHEBI:145989"/>
    </ligand>
</feature>
<feature type="binding site" evidence="1">
    <location>
        <position position="27"/>
    </location>
    <ligand>
        <name>3-phosphoshikimate</name>
        <dbReference type="ChEBI" id="CHEBI:145989"/>
    </ligand>
</feature>
<feature type="binding site" evidence="1">
    <location>
        <position position="96"/>
    </location>
    <ligand>
        <name>phosphoenolpyruvate</name>
        <dbReference type="ChEBI" id="CHEBI:58702"/>
    </ligand>
</feature>
<feature type="binding site" evidence="1">
    <location>
        <position position="124"/>
    </location>
    <ligand>
        <name>phosphoenolpyruvate</name>
        <dbReference type="ChEBI" id="CHEBI:58702"/>
    </ligand>
</feature>
<feature type="binding site" evidence="1">
    <location>
        <position position="169"/>
    </location>
    <ligand>
        <name>3-phosphoshikimate</name>
        <dbReference type="ChEBI" id="CHEBI:145989"/>
    </ligand>
</feature>
<feature type="binding site" evidence="1">
    <location>
        <position position="170"/>
    </location>
    <ligand>
        <name>3-phosphoshikimate</name>
        <dbReference type="ChEBI" id="CHEBI:145989"/>
    </ligand>
</feature>
<feature type="binding site" evidence="1">
    <location>
        <position position="171"/>
    </location>
    <ligand>
        <name>3-phosphoshikimate</name>
        <dbReference type="ChEBI" id="CHEBI:145989"/>
    </ligand>
</feature>
<feature type="binding site" evidence="1">
    <location>
        <position position="171"/>
    </location>
    <ligand>
        <name>phosphoenolpyruvate</name>
        <dbReference type="ChEBI" id="CHEBI:58702"/>
    </ligand>
</feature>
<feature type="binding site" evidence="1">
    <location>
        <position position="197"/>
    </location>
    <ligand>
        <name>3-phosphoshikimate</name>
        <dbReference type="ChEBI" id="CHEBI:145989"/>
    </ligand>
</feature>
<feature type="binding site" evidence="1">
    <location>
        <position position="313"/>
    </location>
    <ligand>
        <name>3-phosphoshikimate</name>
        <dbReference type="ChEBI" id="CHEBI:145989"/>
    </ligand>
</feature>
<feature type="binding site" evidence="1">
    <location>
        <position position="336"/>
    </location>
    <ligand>
        <name>3-phosphoshikimate</name>
        <dbReference type="ChEBI" id="CHEBI:145989"/>
    </ligand>
</feature>
<feature type="binding site" evidence="1">
    <location>
        <position position="340"/>
    </location>
    <ligand>
        <name>3-phosphoshikimate</name>
        <dbReference type="ChEBI" id="CHEBI:145989"/>
    </ligand>
</feature>
<feature type="binding site" evidence="1">
    <location>
        <position position="344"/>
    </location>
    <ligand>
        <name>phosphoenolpyruvate</name>
        <dbReference type="ChEBI" id="CHEBI:58702"/>
    </ligand>
</feature>
<feature type="binding site" evidence="1">
    <location>
        <position position="386"/>
    </location>
    <ligand>
        <name>phosphoenolpyruvate</name>
        <dbReference type="ChEBI" id="CHEBI:58702"/>
    </ligand>
</feature>
<feature type="binding site" evidence="1">
    <location>
        <position position="411"/>
    </location>
    <ligand>
        <name>phosphoenolpyruvate</name>
        <dbReference type="ChEBI" id="CHEBI:58702"/>
    </ligand>
</feature>
<proteinExistence type="inferred from homology"/>
<dbReference type="EC" id="2.5.1.19" evidence="1"/>
<dbReference type="EMBL" id="CP000946">
    <property type="protein sequence ID" value="ACA78317.1"/>
    <property type="molecule type" value="Genomic_DNA"/>
</dbReference>
<dbReference type="RefSeq" id="WP_000445249.1">
    <property type="nucleotide sequence ID" value="NZ_MTFT01000009.1"/>
</dbReference>
<dbReference type="BMRB" id="B1IW23"/>
<dbReference type="SMR" id="B1IW23"/>
<dbReference type="KEGG" id="ecl:EcolC_2688"/>
<dbReference type="HOGENOM" id="CLU_024321_0_0_6"/>
<dbReference type="UniPathway" id="UPA00053">
    <property type="reaction ID" value="UER00089"/>
</dbReference>
<dbReference type="GO" id="GO:0005737">
    <property type="term" value="C:cytoplasm"/>
    <property type="evidence" value="ECO:0007669"/>
    <property type="project" value="UniProtKB-SubCell"/>
</dbReference>
<dbReference type="GO" id="GO:0003866">
    <property type="term" value="F:3-phosphoshikimate 1-carboxyvinyltransferase activity"/>
    <property type="evidence" value="ECO:0007669"/>
    <property type="project" value="UniProtKB-UniRule"/>
</dbReference>
<dbReference type="GO" id="GO:0008652">
    <property type="term" value="P:amino acid biosynthetic process"/>
    <property type="evidence" value="ECO:0007669"/>
    <property type="project" value="UniProtKB-KW"/>
</dbReference>
<dbReference type="GO" id="GO:0009073">
    <property type="term" value="P:aromatic amino acid family biosynthetic process"/>
    <property type="evidence" value="ECO:0007669"/>
    <property type="project" value="UniProtKB-KW"/>
</dbReference>
<dbReference type="GO" id="GO:0009423">
    <property type="term" value="P:chorismate biosynthetic process"/>
    <property type="evidence" value="ECO:0007669"/>
    <property type="project" value="UniProtKB-UniRule"/>
</dbReference>
<dbReference type="CDD" id="cd01554">
    <property type="entry name" value="EPT-like"/>
    <property type="match status" value="1"/>
</dbReference>
<dbReference type="FunFam" id="3.65.10.10:FF:000003">
    <property type="entry name" value="3-phosphoshikimate 1-carboxyvinyltransferase"/>
    <property type="match status" value="1"/>
</dbReference>
<dbReference type="FunFam" id="3.65.10.10:FF:000004">
    <property type="entry name" value="3-phosphoshikimate 1-carboxyvinyltransferase"/>
    <property type="match status" value="1"/>
</dbReference>
<dbReference type="Gene3D" id="3.65.10.10">
    <property type="entry name" value="Enolpyruvate transferase domain"/>
    <property type="match status" value="2"/>
</dbReference>
<dbReference type="HAMAP" id="MF_00210">
    <property type="entry name" value="EPSP_synth"/>
    <property type="match status" value="1"/>
</dbReference>
<dbReference type="InterPro" id="IPR001986">
    <property type="entry name" value="Enolpyruvate_Tfrase_dom"/>
</dbReference>
<dbReference type="InterPro" id="IPR036968">
    <property type="entry name" value="Enolpyruvate_Tfrase_sf"/>
</dbReference>
<dbReference type="InterPro" id="IPR006264">
    <property type="entry name" value="EPSP_synthase"/>
</dbReference>
<dbReference type="InterPro" id="IPR023193">
    <property type="entry name" value="EPSP_synthase_CS"/>
</dbReference>
<dbReference type="InterPro" id="IPR013792">
    <property type="entry name" value="RNA3'P_cycl/enolpyr_Trfase_a/b"/>
</dbReference>
<dbReference type="NCBIfam" id="TIGR01356">
    <property type="entry name" value="aroA"/>
    <property type="match status" value="1"/>
</dbReference>
<dbReference type="PANTHER" id="PTHR21090">
    <property type="entry name" value="AROM/DEHYDROQUINATE SYNTHASE"/>
    <property type="match status" value="1"/>
</dbReference>
<dbReference type="PANTHER" id="PTHR21090:SF5">
    <property type="entry name" value="PENTAFUNCTIONAL AROM POLYPEPTIDE"/>
    <property type="match status" value="1"/>
</dbReference>
<dbReference type="Pfam" id="PF00275">
    <property type="entry name" value="EPSP_synthase"/>
    <property type="match status" value="1"/>
</dbReference>
<dbReference type="PIRSF" id="PIRSF000505">
    <property type="entry name" value="EPSPS"/>
    <property type="match status" value="1"/>
</dbReference>
<dbReference type="SUPFAM" id="SSF55205">
    <property type="entry name" value="EPT/RTPC-like"/>
    <property type="match status" value="1"/>
</dbReference>
<dbReference type="PROSITE" id="PS00104">
    <property type="entry name" value="EPSP_SYNTHASE_1"/>
    <property type="match status" value="1"/>
</dbReference>
<dbReference type="PROSITE" id="PS00885">
    <property type="entry name" value="EPSP_SYNTHASE_2"/>
    <property type="match status" value="1"/>
</dbReference>
<sequence length="427" mass="46082">MESLTLQPIARVDGTINLPGSKSVSNRALLLAALAHGKTVLTNLLDSDDVRHMLNALTGLGVSYTLSADRTRCEIIGNGGPLHAEGALELFLGNAGTAMRPLAAALCLGSNDIVLTGEPRMKERPIGHLVDALRLGGAKITYLEQENYPPLRLQGGFTGGNVDVDGSVSSQFLTALLMTAPLAPEDTVIRIKGDLVSKPYIDITLNLMKTFGVEIENQHYQQFVVKGGQSYQSPGTYLVEGDASSASYFLAAAAIKGGTVKVTGIGRNSMQGDIRFADVLEKMGATICWGDDYISCTRGELNAIDMDMNHIPDAAMTIATAALFAKGTTTLRNIYNWRVKETDRLFAMATELRKVGAEVEEGHDYIRITPPEKLNFAEIATYNDHRMAMCFSLVALSDTPVTILDPKCTAKTFPDYFEQLARISQAA</sequence>
<accession>B1IW23</accession>
<comment type="function">
    <text evidence="1">Catalyzes the transfer of the enolpyruvyl moiety of phosphoenolpyruvate (PEP) to the 5-hydroxyl of shikimate-3-phosphate (S3P) to produce enolpyruvyl shikimate-3-phosphate and inorganic phosphate.</text>
</comment>
<comment type="catalytic activity">
    <reaction evidence="1">
        <text>3-phosphoshikimate + phosphoenolpyruvate = 5-O-(1-carboxyvinyl)-3-phosphoshikimate + phosphate</text>
        <dbReference type="Rhea" id="RHEA:21256"/>
        <dbReference type="ChEBI" id="CHEBI:43474"/>
        <dbReference type="ChEBI" id="CHEBI:57701"/>
        <dbReference type="ChEBI" id="CHEBI:58702"/>
        <dbReference type="ChEBI" id="CHEBI:145989"/>
        <dbReference type="EC" id="2.5.1.19"/>
    </reaction>
    <physiologicalReaction direction="left-to-right" evidence="1">
        <dbReference type="Rhea" id="RHEA:21257"/>
    </physiologicalReaction>
</comment>
<comment type="pathway">
    <text evidence="1">Metabolic intermediate biosynthesis; chorismate biosynthesis; chorismate from D-erythrose 4-phosphate and phosphoenolpyruvate: step 6/7.</text>
</comment>
<comment type="subunit">
    <text evidence="1">Monomer.</text>
</comment>
<comment type="subcellular location">
    <subcellularLocation>
        <location evidence="1">Cytoplasm</location>
    </subcellularLocation>
</comment>
<comment type="similarity">
    <text evidence="1">Belongs to the EPSP synthase family.</text>
</comment>
<evidence type="ECO:0000255" key="1">
    <source>
        <dbReference type="HAMAP-Rule" id="MF_00210"/>
    </source>
</evidence>
<reference key="1">
    <citation type="submission" date="2008-02" db="EMBL/GenBank/DDBJ databases">
        <title>Complete sequence of Escherichia coli C str. ATCC 8739.</title>
        <authorList>
            <person name="Copeland A."/>
            <person name="Lucas S."/>
            <person name="Lapidus A."/>
            <person name="Glavina del Rio T."/>
            <person name="Dalin E."/>
            <person name="Tice H."/>
            <person name="Bruce D."/>
            <person name="Goodwin L."/>
            <person name="Pitluck S."/>
            <person name="Kiss H."/>
            <person name="Brettin T."/>
            <person name="Detter J.C."/>
            <person name="Han C."/>
            <person name="Kuske C.R."/>
            <person name="Schmutz J."/>
            <person name="Larimer F."/>
            <person name="Land M."/>
            <person name="Hauser L."/>
            <person name="Kyrpides N."/>
            <person name="Mikhailova N."/>
            <person name="Ingram L."/>
            <person name="Richardson P."/>
        </authorList>
    </citation>
    <scope>NUCLEOTIDE SEQUENCE [LARGE SCALE GENOMIC DNA]</scope>
    <source>
        <strain>ATCC 8739 / DSM 1576 / NBRC 3972 / NCIMB 8545 / WDCM 00012 / Crooks</strain>
    </source>
</reference>
<keyword id="KW-0028">Amino-acid biosynthesis</keyword>
<keyword id="KW-0057">Aromatic amino acid biosynthesis</keyword>
<keyword id="KW-0963">Cytoplasm</keyword>
<keyword id="KW-0808">Transferase</keyword>
<organism>
    <name type="scientific">Escherichia coli (strain ATCC 8739 / DSM 1576 / NBRC 3972 / NCIMB 8545 / WDCM 00012 / Crooks)</name>
    <dbReference type="NCBI Taxonomy" id="481805"/>
    <lineage>
        <taxon>Bacteria</taxon>
        <taxon>Pseudomonadati</taxon>
        <taxon>Pseudomonadota</taxon>
        <taxon>Gammaproteobacteria</taxon>
        <taxon>Enterobacterales</taxon>
        <taxon>Enterobacteriaceae</taxon>
        <taxon>Escherichia</taxon>
    </lineage>
</organism>